<dbReference type="EC" id="2.5.1.75" evidence="1"/>
<dbReference type="EMBL" id="AM260525">
    <property type="protein sequence ID" value="CAK01902.1"/>
    <property type="molecule type" value="Genomic_DNA"/>
</dbReference>
<dbReference type="RefSeq" id="WP_012232028.1">
    <property type="nucleotide sequence ID" value="NC_010161.1"/>
</dbReference>
<dbReference type="SMR" id="A9IW77"/>
<dbReference type="KEGG" id="btr:BT_1561"/>
<dbReference type="eggNOG" id="COG0324">
    <property type="taxonomic scope" value="Bacteria"/>
</dbReference>
<dbReference type="HOGENOM" id="CLU_032616_0_1_5"/>
<dbReference type="Proteomes" id="UP000001592">
    <property type="component" value="Chromosome"/>
</dbReference>
<dbReference type="GO" id="GO:0005524">
    <property type="term" value="F:ATP binding"/>
    <property type="evidence" value="ECO:0007669"/>
    <property type="project" value="UniProtKB-UniRule"/>
</dbReference>
<dbReference type="GO" id="GO:0052381">
    <property type="term" value="F:tRNA dimethylallyltransferase activity"/>
    <property type="evidence" value="ECO:0007669"/>
    <property type="project" value="UniProtKB-UniRule"/>
</dbReference>
<dbReference type="GO" id="GO:0006400">
    <property type="term" value="P:tRNA modification"/>
    <property type="evidence" value="ECO:0007669"/>
    <property type="project" value="TreeGrafter"/>
</dbReference>
<dbReference type="Gene3D" id="1.10.20.140">
    <property type="match status" value="1"/>
</dbReference>
<dbReference type="Gene3D" id="3.40.50.300">
    <property type="entry name" value="P-loop containing nucleotide triphosphate hydrolases"/>
    <property type="match status" value="1"/>
</dbReference>
<dbReference type="HAMAP" id="MF_00185">
    <property type="entry name" value="IPP_trans"/>
    <property type="match status" value="1"/>
</dbReference>
<dbReference type="InterPro" id="IPR039657">
    <property type="entry name" value="Dimethylallyltransferase"/>
</dbReference>
<dbReference type="InterPro" id="IPR018022">
    <property type="entry name" value="IPT"/>
</dbReference>
<dbReference type="InterPro" id="IPR027417">
    <property type="entry name" value="P-loop_NTPase"/>
</dbReference>
<dbReference type="NCBIfam" id="TIGR00174">
    <property type="entry name" value="miaA"/>
    <property type="match status" value="1"/>
</dbReference>
<dbReference type="PANTHER" id="PTHR11088">
    <property type="entry name" value="TRNA DIMETHYLALLYLTRANSFERASE"/>
    <property type="match status" value="1"/>
</dbReference>
<dbReference type="PANTHER" id="PTHR11088:SF60">
    <property type="entry name" value="TRNA DIMETHYLALLYLTRANSFERASE"/>
    <property type="match status" value="1"/>
</dbReference>
<dbReference type="Pfam" id="PF01715">
    <property type="entry name" value="IPPT"/>
    <property type="match status" value="1"/>
</dbReference>
<dbReference type="SUPFAM" id="SSF52540">
    <property type="entry name" value="P-loop containing nucleoside triphosphate hydrolases"/>
    <property type="match status" value="2"/>
</dbReference>
<evidence type="ECO:0000255" key="1">
    <source>
        <dbReference type="HAMAP-Rule" id="MF_00185"/>
    </source>
</evidence>
<name>MIAA_BART1</name>
<gene>
    <name evidence="1" type="primary">miaA</name>
    <name type="ordered locus">BT_1561</name>
</gene>
<organism>
    <name type="scientific">Bartonella tribocorum (strain CIP 105476 / IBS 506)</name>
    <dbReference type="NCBI Taxonomy" id="382640"/>
    <lineage>
        <taxon>Bacteria</taxon>
        <taxon>Pseudomonadati</taxon>
        <taxon>Pseudomonadota</taxon>
        <taxon>Alphaproteobacteria</taxon>
        <taxon>Hyphomicrobiales</taxon>
        <taxon>Bartonellaceae</taxon>
        <taxon>Bartonella</taxon>
    </lineage>
</organism>
<feature type="chain" id="PRO_1000077386" description="tRNA dimethylallyltransferase">
    <location>
        <begin position="1"/>
        <end position="290"/>
    </location>
</feature>
<feature type="region of interest" description="Interaction with substrate tRNA" evidence="1">
    <location>
        <begin position="36"/>
        <end position="39"/>
    </location>
</feature>
<feature type="region of interest" description="Interaction with substrate tRNA" evidence="1">
    <location>
        <begin position="158"/>
        <end position="162"/>
    </location>
</feature>
<feature type="binding site" evidence="1">
    <location>
        <begin position="11"/>
        <end position="18"/>
    </location>
    <ligand>
        <name>ATP</name>
        <dbReference type="ChEBI" id="CHEBI:30616"/>
    </ligand>
</feature>
<feature type="binding site" evidence="1">
    <location>
        <begin position="13"/>
        <end position="18"/>
    </location>
    <ligand>
        <name>substrate</name>
    </ligand>
</feature>
<feature type="site" description="Interaction with substrate tRNA" evidence="1">
    <location>
        <position position="100"/>
    </location>
</feature>
<feature type="site" description="Interaction with substrate tRNA" evidence="1">
    <location>
        <position position="122"/>
    </location>
</feature>
<accession>A9IW77</accession>
<keyword id="KW-0067">ATP-binding</keyword>
<keyword id="KW-0460">Magnesium</keyword>
<keyword id="KW-0547">Nucleotide-binding</keyword>
<keyword id="KW-0808">Transferase</keyword>
<keyword id="KW-0819">tRNA processing</keyword>
<protein>
    <recommendedName>
        <fullName evidence="1">tRNA dimethylallyltransferase</fullName>
        <ecNumber evidence="1">2.5.1.75</ecNumber>
    </recommendedName>
    <alternativeName>
        <fullName evidence="1">Dimethylallyl diphosphate:tRNA dimethylallyltransferase</fullName>
        <shortName evidence="1">DMAPP:tRNA dimethylallyltransferase</shortName>
        <shortName evidence="1">DMATase</shortName>
    </alternativeName>
    <alternativeName>
        <fullName evidence="1">Isopentenyl-diphosphate:tRNA isopentenyltransferase</fullName>
        <shortName evidence="1">IPP transferase</shortName>
        <shortName evidence="1">IPPT</shortName>
        <shortName evidence="1">IPTase</shortName>
    </alternativeName>
</protein>
<reference key="1">
    <citation type="journal article" date="2007" name="Nat. Genet.">
        <title>Genomic analysis of Bartonella identifies type IV secretion systems as host adaptability factors.</title>
        <authorList>
            <person name="Saenz H.L."/>
            <person name="Engel P."/>
            <person name="Stoeckli M.C."/>
            <person name="Lanz C."/>
            <person name="Raddatz G."/>
            <person name="Vayssier-Taussat M."/>
            <person name="Birtles R."/>
            <person name="Schuster S.C."/>
            <person name="Dehio C."/>
        </authorList>
    </citation>
    <scope>NUCLEOTIDE SEQUENCE [LARGE SCALE GENOMIC DNA]</scope>
    <source>
        <strain>CIP 105476 / IBS 506</strain>
    </source>
</reference>
<sequence>MTLRTITLIAGPTASGKSELALQMAQEKNALIINADSMQVYDVLNILTARPREADTAIVPHYLYGHVSPTLNYSVGQWLCDVEKLLVTFTSRSVIFVGGTGLYFRALLEGISKIPHVPDVVRQKWRLLLNKEGAESLYRQLLQIDAVVAEKISSQDGQRIVRALEVYDATGEKLSWWQKQKTTPLIAPSRAEKILLMRPRALLYERIHKRLDSMIERGVLEEVVAMKKLMLSPSLPVMKAIGIPEFMAYLDGYRSFENALEAAKTQTRRYAKRQMTWFRHQFDEEWMLTS</sequence>
<comment type="function">
    <text evidence="1">Catalyzes the transfer of a dimethylallyl group onto the adenine at position 37 in tRNAs that read codons beginning with uridine, leading to the formation of N6-(dimethylallyl)adenosine (i(6)A).</text>
</comment>
<comment type="catalytic activity">
    <reaction evidence="1">
        <text>adenosine(37) in tRNA + dimethylallyl diphosphate = N(6)-dimethylallyladenosine(37) in tRNA + diphosphate</text>
        <dbReference type="Rhea" id="RHEA:26482"/>
        <dbReference type="Rhea" id="RHEA-COMP:10162"/>
        <dbReference type="Rhea" id="RHEA-COMP:10375"/>
        <dbReference type="ChEBI" id="CHEBI:33019"/>
        <dbReference type="ChEBI" id="CHEBI:57623"/>
        <dbReference type="ChEBI" id="CHEBI:74411"/>
        <dbReference type="ChEBI" id="CHEBI:74415"/>
        <dbReference type="EC" id="2.5.1.75"/>
    </reaction>
</comment>
<comment type="cofactor">
    <cofactor evidence="1">
        <name>Mg(2+)</name>
        <dbReference type="ChEBI" id="CHEBI:18420"/>
    </cofactor>
</comment>
<comment type="subunit">
    <text evidence="1">Monomer.</text>
</comment>
<comment type="similarity">
    <text evidence="1">Belongs to the IPP transferase family.</text>
</comment>
<proteinExistence type="inferred from homology"/>